<proteinExistence type="inferred from homology"/>
<comment type="function">
    <text evidence="1">Catalyzes the methylthiolation of N6-(dimethylallyl)adenosine (i(6)A), leading to the formation of 2-methylthio-N6-(dimethylallyl)adenosine (ms(2)i(6)A) at position 37 in tRNAs that read codons beginning with uridine.</text>
</comment>
<comment type="catalytic activity">
    <reaction evidence="1">
        <text>N(6)-dimethylallyladenosine(37) in tRNA + (sulfur carrier)-SH + AH2 + 2 S-adenosyl-L-methionine = 2-methylsulfanyl-N(6)-dimethylallyladenosine(37) in tRNA + (sulfur carrier)-H + 5'-deoxyadenosine + L-methionine + A + S-adenosyl-L-homocysteine + 2 H(+)</text>
        <dbReference type="Rhea" id="RHEA:37067"/>
        <dbReference type="Rhea" id="RHEA-COMP:10375"/>
        <dbReference type="Rhea" id="RHEA-COMP:10376"/>
        <dbReference type="Rhea" id="RHEA-COMP:14737"/>
        <dbReference type="Rhea" id="RHEA-COMP:14739"/>
        <dbReference type="ChEBI" id="CHEBI:13193"/>
        <dbReference type="ChEBI" id="CHEBI:15378"/>
        <dbReference type="ChEBI" id="CHEBI:17319"/>
        <dbReference type="ChEBI" id="CHEBI:17499"/>
        <dbReference type="ChEBI" id="CHEBI:29917"/>
        <dbReference type="ChEBI" id="CHEBI:57844"/>
        <dbReference type="ChEBI" id="CHEBI:57856"/>
        <dbReference type="ChEBI" id="CHEBI:59789"/>
        <dbReference type="ChEBI" id="CHEBI:64428"/>
        <dbReference type="ChEBI" id="CHEBI:74415"/>
        <dbReference type="ChEBI" id="CHEBI:74417"/>
        <dbReference type="EC" id="2.8.4.3"/>
    </reaction>
</comment>
<comment type="cofactor">
    <cofactor evidence="1">
        <name>[4Fe-4S] cluster</name>
        <dbReference type="ChEBI" id="CHEBI:49883"/>
    </cofactor>
    <text evidence="1">Binds 2 [4Fe-4S] clusters. One cluster is coordinated with 3 cysteines and an exchangeable S-adenosyl-L-methionine.</text>
</comment>
<comment type="subunit">
    <text evidence="1">Monomer.</text>
</comment>
<comment type="subcellular location">
    <subcellularLocation>
        <location evidence="1">Cytoplasm</location>
    </subcellularLocation>
</comment>
<comment type="similarity">
    <text evidence="1">Belongs to the methylthiotransferase family. MiaB subfamily.</text>
</comment>
<evidence type="ECO:0000255" key="1">
    <source>
        <dbReference type="HAMAP-Rule" id="MF_01864"/>
    </source>
</evidence>
<evidence type="ECO:0000255" key="2">
    <source>
        <dbReference type="PROSITE-ProRule" id="PRU01266"/>
    </source>
</evidence>
<feature type="chain" id="PRO_0000374161" description="tRNA-2-methylthio-N(6)-dimethylallyladenosine synthase">
    <location>
        <begin position="1"/>
        <end position="466"/>
    </location>
</feature>
<feature type="domain" description="MTTase N-terminal" evidence="1">
    <location>
        <begin position="5"/>
        <end position="125"/>
    </location>
</feature>
<feature type="domain" description="Radical SAM core" evidence="2">
    <location>
        <begin position="152"/>
        <end position="384"/>
    </location>
</feature>
<feature type="domain" description="TRAM" evidence="1">
    <location>
        <begin position="387"/>
        <end position="449"/>
    </location>
</feature>
<feature type="binding site" evidence="1">
    <location>
        <position position="14"/>
    </location>
    <ligand>
        <name>[4Fe-4S] cluster</name>
        <dbReference type="ChEBI" id="CHEBI:49883"/>
        <label>1</label>
    </ligand>
</feature>
<feature type="binding site" evidence="1">
    <location>
        <position position="50"/>
    </location>
    <ligand>
        <name>[4Fe-4S] cluster</name>
        <dbReference type="ChEBI" id="CHEBI:49883"/>
        <label>1</label>
    </ligand>
</feature>
<feature type="binding site" evidence="1">
    <location>
        <position position="88"/>
    </location>
    <ligand>
        <name>[4Fe-4S] cluster</name>
        <dbReference type="ChEBI" id="CHEBI:49883"/>
        <label>1</label>
    </ligand>
</feature>
<feature type="binding site" evidence="1">
    <location>
        <position position="166"/>
    </location>
    <ligand>
        <name>[4Fe-4S] cluster</name>
        <dbReference type="ChEBI" id="CHEBI:49883"/>
        <label>2</label>
        <note>4Fe-4S-S-AdoMet</note>
    </ligand>
</feature>
<feature type="binding site" evidence="1">
    <location>
        <position position="170"/>
    </location>
    <ligand>
        <name>[4Fe-4S] cluster</name>
        <dbReference type="ChEBI" id="CHEBI:49883"/>
        <label>2</label>
        <note>4Fe-4S-S-AdoMet</note>
    </ligand>
</feature>
<feature type="binding site" evidence="1">
    <location>
        <position position="173"/>
    </location>
    <ligand>
        <name>[4Fe-4S] cluster</name>
        <dbReference type="ChEBI" id="CHEBI:49883"/>
        <label>2</label>
        <note>4Fe-4S-S-AdoMet</note>
    </ligand>
</feature>
<gene>
    <name evidence="1" type="primary">miaB</name>
    <name type="ordered locus">BBta_0046</name>
</gene>
<reference key="1">
    <citation type="journal article" date="2007" name="Science">
        <title>Legumes symbioses: absence of nod genes in photosynthetic bradyrhizobia.</title>
        <authorList>
            <person name="Giraud E."/>
            <person name="Moulin L."/>
            <person name="Vallenet D."/>
            <person name="Barbe V."/>
            <person name="Cytryn E."/>
            <person name="Avarre J.-C."/>
            <person name="Jaubert M."/>
            <person name="Simon D."/>
            <person name="Cartieaux F."/>
            <person name="Prin Y."/>
            <person name="Bena G."/>
            <person name="Hannibal L."/>
            <person name="Fardoux J."/>
            <person name="Kojadinovic M."/>
            <person name="Vuillet L."/>
            <person name="Lajus A."/>
            <person name="Cruveiller S."/>
            <person name="Rouy Z."/>
            <person name="Mangenot S."/>
            <person name="Segurens B."/>
            <person name="Dossat C."/>
            <person name="Franck W.L."/>
            <person name="Chang W.-S."/>
            <person name="Saunders E."/>
            <person name="Bruce D."/>
            <person name="Richardson P."/>
            <person name="Normand P."/>
            <person name="Dreyfus B."/>
            <person name="Pignol D."/>
            <person name="Stacey G."/>
            <person name="Emerich D."/>
            <person name="Vermeglio A."/>
            <person name="Medigue C."/>
            <person name="Sadowsky M."/>
        </authorList>
    </citation>
    <scope>NUCLEOTIDE SEQUENCE [LARGE SCALE GENOMIC DNA]</scope>
    <source>
        <strain>BTAi1 / ATCC BAA-1182</strain>
    </source>
</reference>
<dbReference type="EC" id="2.8.4.3" evidence="1"/>
<dbReference type="EMBL" id="CP000494">
    <property type="protein sequence ID" value="ABQ32349.1"/>
    <property type="molecule type" value="Genomic_DNA"/>
</dbReference>
<dbReference type="RefSeq" id="WP_011942573.1">
    <property type="nucleotide sequence ID" value="NC_009485.1"/>
</dbReference>
<dbReference type="SMR" id="A5E855"/>
<dbReference type="STRING" id="288000.BBta_0046"/>
<dbReference type="KEGG" id="bbt:BBta_0046"/>
<dbReference type="eggNOG" id="COG0621">
    <property type="taxonomic scope" value="Bacteria"/>
</dbReference>
<dbReference type="HOGENOM" id="CLU_018697_2_0_5"/>
<dbReference type="OrthoDB" id="9805215at2"/>
<dbReference type="Proteomes" id="UP000000246">
    <property type="component" value="Chromosome"/>
</dbReference>
<dbReference type="GO" id="GO:0005829">
    <property type="term" value="C:cytosol"/>
    <property type="evidence" value="ECO:0007669"/>
    <property type="project" value="TreeGrafter"/>
</dbReference>
<dbReference type="GO" id="GO:0051539">
    <property type="term" value="F:4 iron, 4 sulfur cluster binding"/>
    <property type="evidence" value="ECO:0007669"/>
    <property type="project" value="UniProtKB-UniRule"/>
</dbReference>
<dbReference type="GO" id="GO:0046872">
    <property type="term" value="F:metal ion binding"/>
    <property type="evidence" value="ECO:0007669"/>
    <property type="project" value="UniProtKB-KW"/>
</dbReference>
<dbReference type="GO" id="GO:0035597">
    <property type="term" value="F:N6-isopentenyladenosine methylthiotransferase activity"/>
    <property type="evidence" value="ECO:0007669"/>
    <property type="project" value="TreeGrafter"/>
</dbReference>
<dbReference type="CDD" id="cd01335">
    <property type="entry name" value="Radical_SAM"/>
    <property type="match status" value="1"/>
</dbReference>
<dbReference type="FunFam" id="3.40.50.12160:FF:000003">
    <property type="entry name" value="CDK5 regulatory subunit-associated protein 1"/>
    <property type="match status" value="1"/>
</dbReference>
<dbReference type="FunFam" id="3.80.30.20:FF:000001">
    <property type="entry name" value="tRNA-2-methylthio-N(6)-dimethylallyladenosine synthase 2"/>
    <property type="match status" value="1"/>
</dbReference>
<dbReference type="Gene3D" id="3.40.50.12160">
    <property type="entry name" value="Methylthiotransferase, N-terminal domain"/>
    <property type="match status" value="1"/>
</dbReference>
<dbReference type="Gene3D" id="3.80.30.20">
    <property type="entry name" value="tm_1862 like domain"/>
    <property type="match status" value="1"/>
</dbReference>
<dbReference type="HAMAP" id="MF_01864">
    <property type="entry name" value="tRNA_metthiotr_MiaB"/>
    <property type="match status" value="1"/>
</dbReference>
<dbReference type="InterPro" id="IPR006638">
    <property type="entry name" value="Elp3/MiaA/NifB-like_rSAM"/>
</dbReference>
<dbReference type="InterPro" id="IPR005839">
    <property type="entry name" value="Methylthiotransferase"/>
</dbReference>
<dbReference type="InterPro" id="IPR020612">
    <property type="entry name" value="Methylthiotransferase_CS"/>
</dbReference>
<dbReference type="InterPro" id="IPR013848">
    <property type="entry name" value="Methylthiotransferase_N"/>
</dbReference>
<dbReference type="InterPro" id="IPR038135">
    <property type="entry name" value="Methylthiotransferase_N_sf"/>
</dbReference>
<dbReference type="InterPro" id="IPR006463">
    <property type="entry name" value="MiaB_methiolase"/>
</dbReference>
<dbReference type="InterPro" id="IPR007197">
    <property type="entry name" value="rSAM"/>
</dbReference>
<dbReference type="InterPro" id="IPR023404">
    <property type="entry name" value="rSAM_horseshoe"/>
</dbReference>
<dbReference type="InterPro" id="IPR002792">
    <property type="entry name" value="TRAM_dom"/>
</dbReference>
<dbReference type="NCBIfam" id="TIGR01574">
    <property type="entry name" value="miaB-methiolase"/>
    <property type="match status" value="1"/>
</dbReference>
<dbReference type="NCBIfam" id="TIGR00089">
    <property type="entry name" value="MiaB/RimO family radical SAM methylthiotransferase"/>
    <property type="match status" value="1"/>
</dbReference>
<dbReference type="PANTHER" id="PTHR43020">
    <property type="entry name" value="CDK5 REGULATORY SUBUNIT-ASSOCIATED PROTEIN 1"/>
    <property type="match status" value="1"/>
</dbReference>
<dbReference type="PANTHER" id="PTHR43020:SF2">
    <property type="entry name" value="MITOCHONDRIAL TRNA METHYLTHIOTRANSFERASE CDK5RAP1"/>
    <property type="match status" value="1"/>
</dbReference>
<dbReference type="Pfam" id="PF04055">
    <property type="entry name" value="Radical_SAM"/>
    <property type="match status" value="1"/>
</dbReference>
<dbReference type="Pfam" id="PF01938">
    <property type="entry name" value="TRAM"/>
    <property type="match status" value="1"/>
</dbReference>
<dbReference type="Pfam" id="PF00919">
    <property type="entry name" value="UPF0004"/>
    <property type="match status" value="1"/>
</dbReference>
<dbReference type="SFLD" id="SFLDF00273">
    <property type="entry name" value="(dimethylallyl)adenosine_tRNA"/>
    <property type="match status" value="1"/>
</dbReference>
<dbReference type="SFLD" id="SFLDG01082">
    <property type="entry name" value="B12-binding_domain_containing"/>
    <property type="match status" value="1"/>
</dbReference>
<dbReference type="SFLD" id="SFLDS00029">
    <property type="entry name" value="Radical_SAM"/>
    <property type="match status" value="1"/>
</dbReference>
<dbReference type="SMART" id="SM00729">
    <property type="entry name" value="Elp3"/>
    <property type="match status" value="1"/>
</dbReference>
<dbReference type="SUPFAM" id="SSF102114">
    <property type="entry name" value="Radical SAM enzymes"/>
    <property type="match status" value="1"/>
</dbReference>
<dbReference type="PROSITE" id="PS51449">
    <property type="entry name" value="MTTASE_N"/>
    <property type="match status" value="1"/>
</dbReference>
<dbReference type="PROSITE" id="PS01278">
    <property type="entry name" value="MTTASE_RADICAL"/>
    <property type="match status" value="1"/>
</dbReference>
<dbReference type="PROSITE" id="PS51918">
    <property type="entry name" value="RADICAL_SAM"/>
    <property type="match status" value="1"/>
</dbReference>
<dbReference type="PROSITE" id="PS50926">
    <property type="entry name" value="TRAM"/>
    <property type="match status" value="1"/>
</dbReference>
<protein>
    <recommendedName>
        <fullName evidence="1">tRNA-2-methylthio-N(6)-dimethylallyladenosine synthase</fullName>
        <ecNumber evidence="1">2.8.4.3</ecNumber>
    </recommendedName>
    <alternativeName>
        <fullName evidence="1">(Dimethylallyl)adenosine tRNA methylthiotransferase MiaB</fullName>
    </alternativeName>
    <alternativeName>
        <fullName evidence="1">tRNA-i(6)A37 methylthiotransferase</fullName>
    </alternativeName>
</protein>
<sequence length="466" mass="50539">MTPPRKLHIKSYGCQMNVYDAQRMVDTLGAEGFVETAEAGDADLVILNTCHIREKASEKVYSELGRLRVAKEEAARQGRAMQIAVAGCVAQAEGAEIVTRAPTVDVVVGPQSYHHLPELLARAGRGEPAIETEFPAEDKFGFLARPSREAIRARGVSAFVTVQEGCDKFCTFCVVPYTRGSEMSRPVARILDEVTRLTENGVREITLIGQNVNAYHGEAPDGSTWTLGRLLYGIAEIPGVARIRYSTSHPNDVDDSLIAAHRDLASVMPFVHLPVQSGSDRILGLMNRKHGASDYRKVVDRFRAARPDIAFSSDFIVGFPGETEEDFRATLALIAQIGYAAAYSFKYSPRPGTPAADMQEMVSATEMDERLERLQSLIDSQQAAFNKAAIGTVVDVLFERAARKPGQLVGRTAYLQPAHVMAPDNIIGQVLPVRIDSLERYSLLGELVATAAPVAGAATPLVSIGG</sequence>
<keyword id="KW-0004">4Fe-4S</keyword>
<keyword id="KW-0963">Cytoplasm</keyword>
<keyword id="KW-0408">Iron</keyword>
<keyword id="KW-0411">Iron-sulfur</keyword>
<keyword id="KW-0479">Metal-binding</keyword>
<keyword id="KW-1185">Reference proteome</keyword>
<keyword id="KW-0949">S-adenosyl-L-methionine</keyword>
<keyword id="KW-0808">Transferase</keyword>
<keyword id="KW-0819">tRNA processing</keyword>
<accession>A5E855</accession>
<organism>
    <name type="scientific">Bradyrhizobium sp. (strain BTAi1 / ATCC BAA-1182)</name>
    <dbReference type="NCBI Taxonomy" id="288000"/>
    <lineage>
        <taxon>Bacteria</taxon>
        <taxon>Pseudomonadati</taxon>
        <taxon>Pseudomonadota</taxon>
        <taxon>Alphaproteobacteria</taxon>
        <taxon>Hyphomicrobiales</taxon>
        <taxon>Nitrobacteraceae</taxon>
        <taxon>Bradyrhizobium</taxon>
    </lineage>
</organism>
<name>MIAB_BRASB</name>